<dbReference type="EC" id="6.1.1.5" evidence="1"/>
<dbReference type="EMBL" id="CP000976">
    <property type="protein sequence ID" value="ACH93768.1"/>
    <property type="molecule type" value="Genomic_DNA"/>
</dbReference>
<dbReference type="RefSeq" id="WP_012538573.1">
    <property type="nucleotide sequence ID" value="NC_011229.1"/>
</dbReference>
<dbReference type="SMR" id="B5RN32"/>
<dbReference type="STRING" id="412419.BDU_846"/>
<dbReference type="KEGG" id="bdu:BDU_846"/>
<dbReference type="eggNOG" id="COG0060">
    <property type="taxonomic scope" value="Bacteria"/>
</dbReference>
<dbReference type="HOGENOM" id="CLU_001493_1_1_12"/>
<dbReference type="OrthoDB" id="9810365at2"/>
<dbReference type="Proteomes" id="UP000000611">
    <property type="component" value="Chromosome"/>
</dbReference>
<dbReference type="GO" id="GO:0005737">
    <property type="term" value="C:cytoplasm"/>
    <property type="evidence" value="ECO:0007669"/>
    <property type="project" value="UniProtKB-SubCell"/>
</dbReference>
<dbReference type="GO" id="GO:0002161">
    <property type="term" value="F:aminoacyl-tRNA deacylase activity"/>
    <property type="evidence" value="ECO:0007669"/>
    <property type="project" value="InterPro"/>
</dbReference>
<dbReference type="GO" id="GO:0005524">
    <property type="term" value="F:ATP binding"/>
    <property type="evidence" value="ECO:0007669"/>
    <property type="project" value="UniProtKB-UniRule"/>
</dbReference>
<dbReference type="GO" id="GO:0004822">
    <property type="term" value="F:isoleucine-tRNA ligase activity"/>
    <property type="evidence" value="ECO:0007669"/>
    <property type="project" value="UniProtKB-UniRule"/>
</dbReference>
<dbReference type="GO" id="GO:0000049">
    <property type="term" value="F:tRNA binding"/>
    <property type="evidence" value="ECO:0007669"/>
    <property type="project" value="InterPro"/>
</dbReference>
<dbReference type="GO" id="GO:0008270">
    <property type="term" value="F:zinc ion binding"/>
    <property type="evidence" value="ECO:0007669"/>
    <property type="project" value="UniProtKB-UniRule"/>
</dbReference>
<dbReference type="GO" id="GO:0006428">
    <property type="term" value="P:isoleucyl-tRNA aminoacylation"/>
    <property type="evidence" value="ECO:0007669"/>
    <property type="project" value="UniProtKB-UniRule"/>
</dbReference>
<dbReference type="CDD" id="cd07961">
    <property type="entry name" value="Anticodon_Ia_Ile_ABEc"/>
    <property type="match status" value="1"/>
</dbReference>
<dbReference type="CDD" id="cd00818">
    <property type="entry name" value="IleRS_core"/>
    <property type="match status" value="1"/>
</dbReference>
<dbReference type="FunFam" id="3.40.50.620:FF:000063">
    <property type="entry name" value="Isoleucine--tRNA ligase"/>
    <property type="match status" value="1"/>
</dbReference>
<dbReference type="FunFam" id="3.40.50.620:FF:000133">
    <property type="entry name" value="Isoleucyl-tRNA synthetase, cytoplasmic"/>
    <property type="match status" value="1"/>
</dbReference>
<dbReference type="Gene3D" id="3.40.50.620">
    <property type="entry name" value="HUPs"/>
    <property type="match status" value="2"/>
</dbReference>
<dbReference type="Gene3D" id="1.10.730.10">
    <property type="entry name" value="Isoleucyl-tRNA Synthetase, Domain 1"/>
    <property type="match status" value="1"/>
</dbReference>
<dbReference type="HAMAP" id="MF_02003">
    <property type="entry name" value="Ile_tRNA_synth_type2"/>
    <property type="match status" value="1"/>
</dbReference>
<dbReference type="InterPro" id="IPR002300">
    <property type="entry name" value="aa-tRNA-synth_Ia"/>
</dbReference>
<dbReference type="InterPro" id="IPR033709">
    <property type="entry name" value="Anticodon_Ile_ABEc"/>
</dbReference>
<dbReference type="InterPro" id="IPR002301">
    <property type="entry name" value="Ile-tRNA-ligase"/>
</dbReference>
<dbReference type="InterPro" id="IPR023586">
    <property type="entry name" value="Ile-tRNA-ligase_type2"/>
</dbReference>
<dbReference type="InterPro" id="IPR013155">
    <property type="entry name" value="M/V/L/I-tRNA-synth_anticd-bd"/>
</dbReference>
<dbReference type="InterPro" id="IPR014729">
    <property type="entry name" value="Rossmann-like_a/b/a_fold"/>
</dbReference>
<dbReference type="InterPro" id="IPR009080">
    <property type="entry name" value="tRNAsynth_Ia_anticodon-bd"/>
</dbReference>
<dbReference type="InterPro" id="IPR009008">
    <property type="entry name" value="Val/Leu/Ile-tRNA-synth_edit"/>
</dbReference>
<dbReference type="NCBIfam" id="TIGR00392">
    <property type="entry name" value="ileS"/>
    <property type="match status" value="1"/>
</dbReference>
<dbReference type="PANTHER" id="PTHR42780:SF1">
    <property type="entry name" value="ISOLEUCINE--TRNA LIGASE, CYTOPLASMIC"/>
    <property type="match status" value="1"/>
</dbReference>
<dbReference type="PANTHER" id="PTHR42780">
    <property type="entry name" value="SOLEUCYL-TRNA SYNTHETASE"/>
    <property type="match status" value="1"/>
</dbReference>
<dbReference type="Pfam" id="PF08264">
    <property type="entry name" value="Anticodon_1"/>
    <property type="match status" value="1"/>
</dbReference>
<dbReference type="Pfam" id="PF19302">
    <property type="entry name" value="DUF5915"/>
    <property type="match status" value="1"/>
</dbReference>
<dbReference type="Pfam" id="PF00133">
    <property type="entry name" value="tRNA-synt_1"/>
    <property type="match status" value="1"/>
</dbReference>
<dbReference type="PRINTS" id="PR00984">
    <property type="entry name" value="TRNASYNTHILE"/>
</dbReference>
<dbReference type="SUPFAM" id="SSF47323">
    <property type="entry name" value="Anticodon-binding domain of a subclass of class I aminoacyl-tRNA synthetases"/>
    <property type="match status" value="1"/>
</dbReference>
<dbReference type="SUPFAM" id="SSF52374">
    <property type="entry name" value="Nucleotidylyl transferase"/>
    <property type="match status" value="1"/>
</dbReference>
<dbReference type="SUPFAM" id="SSF50677">
    <property type="entry name" value="ValRS/IleRS/LeuRS editing domain"/>
    <property type="match status" value="1"/>
</dbReference>
<comment type="function">
    <text evidence="1">Catalyzes the attachment of isoleucine to tRNA(Ile). As IleRS can inadvertently accommodate and process structurally similar amino acids such as valine, to avoid such errors it has two additional distinct tRNA(Ile)-dependent editing activities. One activity is designated as 'pretransfer' editing and involves the hydrolysis of activated Val-AMP. The other activity is designated 'posttransfer' editing and involves deacylation of mischarged Val-tRNA(Ile).</text>
</comment>
<comment type="catalytic activity">
    <reaction evidence="1">
        <text>tRNA(Ile) + L-isoleucine + ATP = L-isoleucyl-tRNA(Ile) + AMP + diphosphate</text>
        <dbReference type="Rhea" id="RHEA:11060"/>
        <dbReference type="Rhea" id="RHEA-COMP:9666"/>
        <dbReference type="Rhea" id="RHEA-COMP:9695"/>
        <dbReference type="ChEBI" id="CHEBI:30616"/>
        <dbReference type="ChEBI" id="CHEBI:33019"/>
        <dbReference type="ChEBI" id="CHEBI:58045"/>
        <dbReference type="ChEBI" id="CHEBI:78442"/>
        <dbReference type="ChEBI" id="CHEBI:78528"/>
        <dbReference type="ChEBI" id="CHEBI:456215"/>
        <dbReference type="EC" id="6.1.1.5"/>
    </reaction>
</comment>
<comment type="cofactor">
    <cofactor evidence="1">
        <name>Zn(2+)</name>
        <dbReference type="ChEBI" id="CHEBI:29105"/>
    </cofactor>
</comment>
<comment type="subunit">
    <text evidence="1">Monomer.</text>
</comment>
<comment type="subcellular location">
    <subcellularLocation>
        <location evidence="1">Cytoplasm</location>
    </subcellularLocation>
</comment>
<comment type="domain">
    <text evidence="1">IleRS has two distinct active sites: one for aminoacylation and one for editing. The misactivated valine is translocated from the active site to the editing site, which sterically excludes the correctly activated isoleucine. The single editing site contains two valyl binding pockets, one specific for each substrate (Val-AMP or Val-tRNA(Ile)).</text>
</comment>
<comment type="similarity">
    <text evidence="1">Belongs to the class-I aminoacyl-tRNA synthetase family. IleS type 2 subfamily.</text>
</comment>
<organism>
    <name type="scientific">Borrelia duttonii (strain Ly)</name>
    <dbReference type="NCBI Taxonomy" id="412419"/>
    <lineage>
        <taxon>Bacteria</taxon>
        <taxon>Pseudomonadati</taxon>
        <taxon>Spirochaetota</taxon>
        <taxon>Spirochaetia</taxon>
        <taxon>Spirochaetales</taxon>
        <taxon>Borreliaceae</taxon>
        <taxon>Borrelia</taxon>
    </lineage>
</organism>
<evidence type="ECO:0000255" key="1">
    <source>
        <dbReference type="HAMAP-Rule" id="MF_02003"/>
    </source>
</evidence>
<reference key="1">
    <citation type="journal article" date="2008" name="PLoS Genet.">
        <title>The genome of Borrelia recurrentis, the agent of deadly louse-borne relapsing fever, is a degraded subset of tick-borne Borrelia duttonii.</title>
        <authorList>
            <person name="Lescot M."/>
            <person name="Audic S."/>
            <person name="Robert C."/>
            <person name="Nguyen T.T."/>
            <person name="Blanc G."/>
            <person name="Cutler S.J."/>
            <person name="Wincker P."/>
            <person name="Couloux A."/>
            <person name="Claverie J.-M."/>
            <person name="Raoult D."/>
            <person name="Drancourt M."/>
        </authorList>
    </citation>
    <scope>NUCLEOTIDE SEQUENCE [LARGE SCALE GENOMIC DNA]</scope>
    <source>
        <strain>Ly</strain>
    </source>
</reference>
<keyword id="KW-0030">Aminoacyl-tRNA synthetase</keyword>
<keyword id="KW-0067">ATP-binding</keyword>
<keyword id="KW-0963">Cytoplasm</keyword>
<keyword id="KW-0436">Ligase</keyword>
<keyword id="KW-0479">Metal-binding</keyword>
<keyword id="KW-0547">Nucleotide-binding</keyword>
<keyword id="KW-0648">Protein biosynthesis</keyword>
<keyword id="KW-0862">Zinc</keyword>
<accession>B5RN32</accession>
<feature type="chain" id="PRO_1000216249" description="Isoleucine--tRNA ligase">
    <location>
        <begin position="1"/>
        <end position="1044"/>
    </location>
</feature>
<feature type="short sequence motif" description="'HIGH' region">
    <location>
        <begin position="48"/>
        <end position="58"/>
    </location>
</feature>
<feature type="short sequence motif" description="'KMSKS' region">
    <location>
        <begin position="594"/>
        <end position="598"/>
    </location>
</feature>
<feature type="binding site" evidence="1">
    <location>
        <position position="597"/>
    </location>
    <ligand>
        <name>ATP</name>
        <dbReference type="ChEBI" id="CHEBI:30616"/>
    </ligand>
</feature>
<protein>
    <recommendedName>
        <fullName evidence="1">Isoleucine--tRNA ligase</fullName>
        <ecNumber evidence="1">6.1.1.5</ecNumber>
    </recommendedName>
    <alternativeName>
        <fullName evidence="1">Isoleucyl-tRNA synthetase</fullName>
        <shortName evidence="1">IleRS</shortName>
    </alternativeName>
</protein>
<gene>
    <name evidence="1" type="primary">ileS</name>
    <name type="ordered locus">BDU_846</name>
</gene>
<proteinExistence type="inferred from homology"/>
<sequence length="1044" mass="122965">MFKKVENKVHFPQLEEKILQFWNDNKIFEKSMKQREGCEEFTFYDGPPFATGLPHFGHFVPNTIKDIIPRYQTMKGKHVKRYFGWDTHGLPVEYEVEKSLKLSGRYEIEQYGIDKFNEECRNIVLRYTKEWKKIITRLGRWVDFENNYKTMDLTFMESVWWVFKTLYNKGLIYESYYVLPYSPKLATPLSNFEVNLGEYKEIHDPSLTIKFKIKDKNEYLLAWTTTPWTLPTNLGIAVGKDIDYSKVLDQEKNEIYIIGTKRLNHYYQDENKYVIIEQFKGEHLKGIEYEPLFDYFVNQRNKGAFKIHTAEYVTTDDGTGIVHIAPFGEEDYQILKKNTQTDMITPIDAECKFTSEVKDFEGLFVKDADNKIIEKLKSMNLLFKRENYLHRYPFCYRTNSPLIYRPISSWFVNIEKIKEKLIRSNEQINWIPEHLKKGRFGKWLENARDWAISRNRFWGNPIPIWKCSKTGNKICIGSREELEKLSGQKIIDLHKDKIDKITWPSKYGGTYVRTSEVLDCWFESGSMPYASKHYPFKDKDKFQNIFPADFIAEGLDQTRGWFYTLTILGTALFEKTAFKNVIVNGLVLSSDGKKMSKSLKNYTDPIQIINTFGADALRLYLIMSPVIKADDLKYSDDGVKDVLKNIIIPIWNAYSFFITYAIIDKFTPNNHVNLYKTNILDKWIISEIESLKQILNEEIDKYNLTKSIDVLLTFIDKLNNWYIRRSRRRFWKSENDNDKTDAYETLYYTLKNLMLMLAPFIPFLTEEIYQNLKTKNEKESIHLNDYPQSIKELINIELEEKMNFTRKVITIARALRASHNIKIRKPIKTIYIITKNHKEQNTLREMTEIILEEINAKEIKIKSNEEELVTYKAKANFKELGSKLGTNMKSVALAITKLSNEDILEIINGNKHTITINNNTYDITLKDIILERHERKNLKVINEDSITIGLDTLITEELYLEGLSRELIRKVQNLRKESNFNVTDRIILYTNNDEILTKIINNFENYIKTETLAITIEINNKKALKTLELDEEISVNIGIEKCLN</sequence>
<name>SYI_BORDL</name>